<evidence type="ECO:0000255" key="1">
    <source>
        <dbReference type="HAMAP-Rule" id="MF_00368"/>
    </source>
</evidence>
<evidence type="ECO:0000305" key="2"/>
<keyword id="KW-0687">Ribonucleoprotein</keyword>
<keyword id="KW-0689">Ribosomal protein</keyword>
<feature type="chain" id="PRO_1000121384" description="Large ribosomal subunit protein bL12">
    <location>
        <begin position="1"/>
        <end position="121"/>
    </location>
</feature>
<reference key="1">
    <citation type="journal article" date="2008" name="BMC Genomics">
        <title>The genome sequence of the fish pathogen Aliivibrio salmonicida strain LFI1238 shows extensive evidence of gene decay.</title>
        <authorList>
            <person name="Hjerde E."/>
            <person name="Lorentzen M.S."/>
            <person name="Holden M.T."/>
            <person name="Seeger K."/>
            <person name="Paulsen S."/>
            <person name="Bason N."/>
            <person name="Churcher C."/>
            <person name="Harris D."/>
            <person name="Norbertczak H."/>
            <person name="Quail M.A."/>
            <person name="Sanders S."/>
            <person name="Thurston S."/>
            <person name="Parkhill J."/>
            <person name="Willassen N.P."/>
            <person name="Thomson N.R."/>
        </authorList>
    </citation>
    <scope>NUCLEOTIDE SEQUENCE [LARGE SCALE GENOMIC DNA]</scope>
    <source>
        <strain>LFI1238</strain>
    </source>
</reference>
<organism>
    <name type="scientific">Aliivibrio salmonicida (strain LFI1238)</name>
    <name type="common">Vibrio salmonicida (strain LFI1238)</name>
    <dbReference type="NCBI Taxonomy" id="316275"/>
    <lineage>
        <taxon>Bacteria</taxon>
        <taxon>Pseudomonadati</taxon>
        <taxon>Pseudomonadota</taxon>
        <taxon>Gammaproteobacteria</taxon>
        <taxon>Vibrionales</taxon>
        <taxon>Vibrionaceae</taxon>
        <taxon>Aliivibrio</taxon>
    </lineage>
</organism>
<protein>
    <recommendedName>
        <fullName evidence="1">Large ribosomal subunit protein bL12</fullName>
    </recommendedName>
    <alternativeName>
        <fullName evidence="2">50S ribosomal protein L7/L12</fullName>
    </alternativeName>
</protein>
<proteinExistence type="inferred from homology"/>
<dbReference type="EMBL" id="FM178379">
    <property type="protein sequence ID" value="CAQ80551.1"/>
    <property type="molecule type" value="Genomic_DNA"/>
</dbReference>
<dbReference type="RefSeq" id="WP_012551289.1">
    <property type="nucleotide sequence ID" value="NC_011312.1"/>
</dbReference>
<dbReference type="SMR" id="B6ENR4"/>
<dbReference type="KEGG" id="vsa:VSAL_I2867"/>
<dbReference type="eggNOG" id="COG0222">
    <property type="taxonomic scope" value="Bacteria"/>
</dbReference>
<dbReference type="HOGENOM" id="CLU_086499_3_2_6"/>
<dbReference type="Proteomes" id="UP000001730">
    <property type="component" value="Chromosome 1"/>
</dbReference>
<dbReference type="GO" id="GO:0022625">
    <property type="term" value="C:cytosolic large ribosomal subunit"/>
    <property type="evidence" value="ECO:0007669"/>
    <property type="project" value="TreeGrafter"/>
</dbReference>
<dbReference type="GO" id="GO:0003729">
    <property type="term" value="F:mRNA binding"/>
    <property type="evidence" value="ECO:0007669"/>
    <property type="project" value="TreeGrafter"/>
</dbReference>
<dbReference type="GO" id="GO:0003735">
    <property type="term" value="F:structural constituent of ribosome"/>
    <property type="evidence" value="ECO:0007669"/>
    <property type="project" value="InterPro"/>
</dbReference>
<dbReference type="GO" id="GO:0006412">
    <property type="term" value="P:translation"/>
    <property type="evidence" value="ECO:0007669"/>
    <property type="project" value="UniProtKB-UniRule"/>
</dbReference>
<dbReference type="CDD" id="cd00387">
    <property type="entry name" value="Ribosomal_L7_L12"/>
    <property type="match status" value="1"/>
</dbReference>
<dbReference type="FunFam" id="1.20.5.710:FF:000001">
    <property type="entry name" value="50S ribosomal protein L7/L12"/>
    <property type="match status" value="1"/>
</dbReference>
<dbReference type="FunFam" id="3.30.1390.10:FF:000001">
    <property type="entry name" value="50S ribosomal protein L7/L12"/>
    <property type="match status" value="1"/>
</dbReference>
<dbReference type="Gene3D" id="3.30.1390.10">
    <property type="match status" value="1"/>
</dbReference>
<dbReference type="Gene3D" id="1.20.5.710">
    <property type="entry name" value="Single helix bin"/>
    <property type="match status" value="1"/>
</dbReference>
<dbReference type="HAMAP" id="MF_00368">
    <property type="entry name" value="Ribosomal_bL12"/>
    <property type="match status" value="1"/>
</dbReference>
<dbReference type="InterPro" id="IPR000206">
    <property type="entry name" value="Ribosomal_bL12"/>
</dbReference>
<dbReference type="InterPro" id="IPR013823">
    <property type="entry name" value="Ribosomal_bL12_C"/>
</dbReference>
<dbReference type="InterPro" id="IPR014719">
    <property type="entry name" value="Ribosomal_bL12_C/ClpS-like"/>
</dbReference>
<dbReference type="InterPro" id="IPR008932">
    <property type="entry name" value="Ribosomal_bL12_oligo"/>
</dbReference>
<dbReference type="InterPro" id="IPR036235">
    <property type="entry name" value="Ribosomal_bL12_oligo_N_sf"/>
</dbReference>
<dbReference type="NCBIfam" id="TIGR00855">
    <property type="entry name" value="L12"/>
    <property type="match status" value="1"/>
</dbReference>
<dbReference type="PANTHER" id="PTHR45987">
    <property type="entry name" value="39S RIBOSOMAL PROTEIN L12"/>
    <property type="match status" value="1"/>
</dbReference>
<dbReference type="PANTHER" id="PTHR45987:SF4">
    <property type="entry name" value="LARGE RIBOSOMAL SUBUNIT PROTEIN BL12M"/>
    <property type="match status" value="1"/>
</dbReference>
<dbReference type="Pfam" id="PF00542">
    <property type="entry name" value="Ribosomal_L12"/>
    <property type="match status" value="1"/>
</dbReference>
<dbReference type="Pfam" id="PF16320">
    <property type="entry name" value="Ribosomal_L12_N"/>
    <property type="match status" value="1"/>
</dbReference>
<dbReference type="SUPFAM" id="SSF54736">
    <property type="entry name" value="ClpS-like"/>
    <property type="match status" value="1"/>
</dbReference>
<dbReference type="SUPFAM" id="SSF48300">
    <property type="entry name" value="Ribosomal protein L7/12, oligomerisation (N-terminal) domain"/>
    <property type="match status" value="1"/>
</dbReference>
<gene>
    <name evidence="1" type="primary">rplL</name>
    <name type="ordered locus">VSAL_I2867</name>
</gene>
<comment type="function">
    <text evidence="1">Forms part of the ribosomal stalk which helps the ribosome interact with GTP-bound translation factors. Is thus essential for accurate translation.</text>
</comment>
<comment type="subunit">
    <text evidence="1">Homodimer. Part of the ribosomal stalk of the 50S ribosomal subunit. Forms a multimeric L10(L12)X complex, where L10 forms an elongated spine to which 2 to 4 L12 dimers bind in a sequential fashion. Binds GTP-bound translation factors.</text>
</comment>
<comment type="similarity">
    <text evidence="1">Belongs to the bacterial ribosomal protein bL12 family.</text>
</comment>
<name>RL7_ALISL</name>
<accession>B6ENR4</accession>
<sequence length="121" mass="12255">MSITNEQILDAVAEMSVMQVVELIEAMEEKFGVTAAAAVVAGGAAAEAAEEQTEFDVILTAIGGNKVSVIKAVRGATGLGLKEAKGLVDSAPAALKEGVDKAEAEGLKAQLEEAGATVEIK</sequence>